<protein>
    <recommendedName>
        <fullName evidence="1">Glutathione-binding protein GsiB</fullName>
    </recommendedName>
</protein>
<organism>
    <name type="scientific">Escherichia coli O6:K15:H31 (strain 536 / UPEC)</name>
    <dbReference type="NCBI Taxonomy" id="362663"/>
    <lineage>
        <taxon>Bacteria</taxon>
        <taxon>Pseudomonadati</taxon>
        <taxon>Pseudomonadota</taxon>
        <taxon>Gammaproteobacteria</taxon>
        <taxon>Enterobacterales</taxon>
        <taxon>Enterobacteriaceae</taxon>
        <taxon>Escherichia</taxon>
    </lineage>
</organism>
<accession>Q0TJL8</accession>
<feature type="signal peptide" evidence="2">
    <location>
        <begin position="1"/>
        <end position="26"/>
    </location>
</feature>
<feature type="chain" id="PRO_0000279977" description="Glutathione-binding protein GsiB">
    <location>
        <begin position="27"/>
        <end position="512"/>
    </location>
</feature>
<name>GSIB_ECOL5</name>
<sequence>MARAVHRSGLVALGIATALMASCAFAAKNVVVAVGSNFTTLDPYDANDTLSQAVAKSFYQGLFGLDKEMKLKNVLAESYTVSDDGLTYTVKLREGIKFQDGTDFNAAAVKANLDRASDPANHLKRYNLYKNIAKTEAIDPTTVKITLKQPFSAFINILAHPATAMISPAALEKYGKEIGFHPVGTGPYELDTWNQTDFVKVKKFVGYWQPGLPKLDSITWRPVADNNTRAAMLQTGEAQFAFPIPYEQAALLEKNKNIELMASPSIMQRYISMNVTQKPFDNPKVREALNYAINRPALVKVAFAGYATPATGVVPPSIAYAQSYKPWPYDPVKARELLKKAGYPNGFSTTLWSSHNHSTAQKVLQFTQQQLAQVGIKAQVTAMDAGQRAAEVEGKGQKESGVRMFYTGWSASTGEADWALSPLFASQNWPPTLFNTAFYSNKQVDDFLAQALKTNDPAEKTRLYKAAQDIIWQESPWIPLVVEKLVSAHSKNLTGFWIMPDTGFSFEDADLQ</sequence>
<proteinExistence type="inferred from homology"/>
<comment type="function">
    <text evidence="1">Part of the ABC transporter complex GsiABCD involved in glutathione import. Binds glutathione.</text>
</comment>
<comment type="subunit">
    <text evidence="1">The complex is composed of two ATP-binding proteins (GsiA), two transmembrane proteins (GsiC and GsiD) and a solute-binding protein (GsiB).</text>
</comment>
<comment type="subcellular location">
    <subcellularLocation>
        <location evidence="1">Periplasm</location>
    </subcellularLocation>
</comment>
<comment type="similarity">
    <text evidence="3">Belongs to the bacterial solute-binding protein 5 family.</text>
</comment>
<comment type="sequence caution" evidence="3">
    <conflict type="frameshift">
        <sequence resource="EMBL-CDS" id="ABG72671"/>
    </conflict>
</comment>
<dbReference type="EMBL" id="CP000247">
    <property type="protein sequence ID" value="ABG72671.1"/>
    <property type="status" value="ALT_FRAME"/>
    <property type="molecule type" value="Genomic_DNA"/>
</dbReference>
<dbReference type="SMR" id="Q0TJL8"/>
<dbReference type="KEGG" id="ecp:ECP_0844"/>
<dbReference type="HOGENOM" id="CLU_017028_7_3_6"/>
<dbReference type="Proteomes" id="UP000009182">
    <property type="component" value="Chromosome"/>
</dbReference>
<dbReference type="GO" id="GO:0043190">
    <property type="term" value="C:ATP-binding cassette (ABC) transporter complex"/>
    <property type="evidence" value="ECO:0007669"/>
    <property type="project" value="InterPro"/>
</dbReference>
<dbReference type="GO" id="GO:0030288">
    <property type="term" value="C:outer membrane-bounded periplasmic space"/>
    <property type="evidence" value="ECO:0007669"/>
    <property type="project" value="TreeGrafter"/>
</dbReference>
<dbReference type="GO" id="GO:1904680">
    <property type="term" value="F:peptide transmembrane transporter activity"/>
    <property type="evidence" value="ECO:0007669"/>
    <property type="project" value="TreeGrafter"/>
</dbReference>
<dbReference type="GO" id="GO:0042938">
    <property type="term" value="P:dipeptide transport"/>
    <property type="evidence" value="ECO:0007669"/>
    <property type="project" value="TreeGrafter"/>
</dbReference>
<dbReference type="CDD" id="cd08499">
    <property type="entry name" value="PBP2_Ylib_like"/>
    <property type="match status" value="1"/>
</dbReference>
<dbReference type="FunFam" id="3.10.105.10:FF:000003">
    <property type="entry name" value="Glutathione ABC transporter substrate-binding protein GsiB"/>
    <property type="match status" value="1"/>
</dbReference>
<dbReference type="FunFam" id="3.40.190.10:FF:000094">
    <property type="entry name" value="Glutathione ABC transporter substrate-binding protein GsiB"/>
    <property type="match status" value="1"/>
</dbReference>
<dbReference type="FunFam" id="3.90.76.10:FF:000003">
    <property type="entry name" value="Glutathione ABC transporter substrate-binding protein GsiB"/>
    <property type="match status" value="1"/>
</dbReference>
<dbReference type="Gene3D" id="3.90.76.10">
    <property type="entry name" value="Dipeptide-binding Protein, Domain 1"/>
    <property type="match status" value="1"/>
</dbReference>
<dbReference type="Gene3D" id="3.10.105.10">
    <property type="entry name" value="Dipeptide-binding Protein, Domain 3"/>
    <property type="match status" value="1"/>
</dbReference>
<dbReference type="Gene3D" id="3.40.190.10">
    <property type="entry name" value="Periplasmic binding protein-like II"/>
    <property type="match status" value="1"/>
</dbReference>
<dbReference type="InterPro" id="IPR030678">
    <property type="entry name" value="Peptide/Ni-bd"/>
</dbReference>
<dbReference type="InterPro" id="IPR039424">
    <property type="entry name" value="SBP_5"/>
</dbReference>
<dbReference type="InterPro" id="IPR023765">
    <property type="entry name" value="SBP_5_CS"/>
</dbReference>
<dbReference type="InterPro" id="IPR000914">
    <property type="entry name" value="SBP_5_dom"/>
</dbReference>
<dbReference type="NCBIfam" id="NF011942">
    <property type="entry name" value="PRK15413.1"/>
    <property type="match status" value="1"/>
</dbReference>
<dbReference type="PANTHER" id="PTHR30290:SF32">
    <property type="entry name" value="GLUTATHIONE-BINDING PROTEIN GSIB"/>
    <property type="match status" value="1"/>
</dbReference>
<dbReference type="PANTHER" id="PTHR30290">
    <property type="entry name" value="PERIPLASMIC BINDING COMPONENT OF ABC TRANSPORTER"/>
    <property type="match status" value="1"/>
</dbReference>
<dbReference type="Pfam" id="PF00496">
    <property type="entry name" value="SBP_bac_5"/>
    <property type="match status" value="1"/>
</dbReference>
<dbReference type="PIRSF" id="PIRSF002741">
    <property type="entry name" value="MppA"/>
    <property type="match status" value="1"/>
</dbReference>
<dbReference type="SUPFAM" id="SSF53850">
    <property type="entry name" value="Periplasmic binding protein-like II"/>
    <property type="match status" value="1"/>
</dbReference>
<dbReference type="PROSITE" id="PS01040">
    <property type="entry name" value="SBP_BACTERIAL_5"/>
    <property type="match status" value="1"/>
</dbReference>
<reference key="1">
    <citation type="journal article" date="2006" name="Mol. Microbiol.">
        <title>Role of pathogenicity island-associated integrases in the genome plasticity of uropathogenic Escherichia coli strain 536.</title>
        <authorList>
            <person name="Hochhut B."/>
            <person name="Wilde C."/>
            <person name="Balling G."/>
            <person name="Middendorf B."/>
            <person name="Dobrindt U."/>
            <person name="Brzuszkiewicz E."/>
            <person name="Gottschalk G."/>
            <person name="Carniel E."/>
            <person name="Hacker J."/>
        </authorList>
    </citation>
    <scope>NUCLEOTIDE SEQUENCE [LARGE SCALE GENOMIC DNA]</scope>
    <source>
        <strain>536 / UPEC</strain>
    </source>
</reference>
<gene>
    <name evidence="1" type="primary">gsiB</name>
    <name type="ordered locus">ECP_0844</name>
</gene>
<evidence type="ECO:0000250" key="1">
    <source>
        <dbReference type="UniProtKB" id="P75797"/>
    </source>
</evidence>
<evidence type="ECO:0000255" key="2"/>
<evidence type="ECO:0000305" key="3"/>
<keyword id="KW-0574">Periplasm</keyword>
<keyword id="KW-0732">Signal</keyword>
<keyword id="KW-0813">Transport</keyword>